<sequence>MNNIRNFSIIAHIDHGKSTLADRIISECGAVDSRVMSAQVMDTMDIEKERGITIKAQSVRLTYKLEGQIYILNLIDTPGHVDFSYEVSRSLASCEGALLVVDASQGVEAQTIANVYIALENNLEIIPVINKIDLPAAEPQRVKNEIEHIIGLDCSEAIEVSAKTGVGIKELIETIIRKIPPPKPGENNPFKSLIYDSWFDNYLGALALVRVYDGAVKKGDEVYVMGTDKKHTVLDLMYPNPIAPIKTNELKTGEVGIIVLGLKNVSDVSVGDTITLAKNRALEAIGGFEKAKPFVFAGLYPIDTDKFEDLRDALDKLKLNDSSISYEPETSAALGFGFRVGFLGLLHMEVVKERLEREFGLDLIATAPTVTYEVVQTDGVSVEIQNPSELPPVNKIEFIKEPYVKATIITPSEFLGNIITLLNNRRAVQTKMDYITTTRVLLEYDIPMNEIVMDFYDKLKSATKGYASFDYEPSDYRVGDLVKLDIKVAGEAVDALSIIVPEEKAMSKGRDFVKTMKELVPRQLFEVAIQASIGNKVIARETVKSMGKNVTAKCYGGDITRKRKLLEKQKEGKKRMKAIGKVTLPQEAFLSVLKID</sequence>
<organism>
    <name type="scientific">Campylobacter fetus subsp. fetus (strain 82-40)</name>
    <dbReference type="NCBI Taxonomy" id="360106"/>
    <lineage>
        <taxon>Bacteria</taxon>
        <taxon>Pseudomonadati</taxon>
        <taxon>Campylobacterota</taxon>
        <taxon>Epsilonproteobacteria</taxon>
        <taxon>Campylobacterales</taxon>
        <taxon>Campylobacteraceae</taxon>
        <taxon>Campylobacter</taxon>
    </lineage>
</organism>
<comment type="function">
    <text evidence="1">Required for accurate and efficient protein synthesis under certain stress conditions. May act as a fidelity factor of the translation reaction, by catalyzing a one-codon backward translocation of tRNAs on improperly translocated ribosomes. Back-translocation proceeds from a post-translocation (POST) complex to a pre-translocation (PRE) complex, thus giving elongation factor G a second chance to translocate the tRNAs correctly. Binds to ribosomes in a GTP-dependent manner.</text>
</comment>
<comment type="catalytic activity">
    <reaction evidence="1">
        <text>GTP + H2O = GDP + phosphate + H(+)</text>
        <dbReference type="Rhea" id="RHEA:19669"/>
        <dbReference type="ChEBI" id="CHEBI:15377"/>
        <dbReference type="ChEBI" id="CHEBI:15378"/>
        <dbReference type="ChEBI" id="CHEBI:37565"/>
        <dbReference type="ChEBI" id="CHEBI:43474"/>
        <dbReference type="ChEBI" id="CHEBI:58189"/>
        <dbReference type="EC" id="3.6.5.n1"/>
    </reaction>
</comment>
<comment type="subcellular location">
    <subcellularLocation>
        <location evidence="1">Cell inner membrane</location>
        <topology evidence="1">Peripheral membrane protein</topology>
        <orientation evidence="1">Cytoplasmic side</orientation>
    </subcellularLocation>
</comment>
<comment type="similarity">
    <text evidence="1">Belongs to the TRAFAC class translation factor GTPase superfamily. Classic translation factor GTPase family. LepA subfamily.</text>
</comment>
<evidence type="ECO:0000255" key="1">
    <source>
        <dbReference type="HAMAP-Rule" id="MF_00071"/>
    </source>
</evidence>
<reference key="1">
    <citation type="submission" date="2006-11" db="EMBL/GenBank/DDBJ databases">
        <title>Sequence of Campylobacter fetus subsp. fetus 82-40.</title>
        <authorList>
            <person name="Fouts D.E."/>
            <person name="Nelson K.E."/>
        </authorList>
    </citation>
    <scope>NUCLEOTIDE SEQUENCE [LARGE SCALE GENOMIC DNA]</scope>
    <source>
        <strain>82-40</strain>
    </source>
</reference>
<gene>
    <name evidence="1" type="primary">lepA</name>
    <name type="ordered locus">CFF8240_1473</name>
</gene>
<accession>A0RQX4</accession>
<keyword id="KW-0997">Cell inner membrane</keyword>
<keyword id="KW-1003">Cell membrane</keyword>
<keyword id="KW-0342">GTP-binding</keyword>
<keyword id="KW-0378">Hydrolase</keyword>
<keyword id="KW-0472">Membrane</keyword>
<keyword id="KW-0547">Nucleotide-binding</keyword>
<keyword id="KW-0648">Protein biosynthesis</keyword>
<protein>
    <recommendedName>
        <fullName evidence="1">Elongation factor 4</fullName>
        <shortName evidence="1">EF-4</shortName>
        <ecNumber evidence="1">3.6.5.n1</ecNumber>
    </recommendedName>
    <alternativeName>
        <fullName evidence="1">Ribosomal back-translocase LepA</fullName>
    </alternativeName>
</protein>
<name>LEPA_CAMFF</name>
<feature type="chain" id="PRO_1000031981" description="Elongation factor 4">
    <location>
        <begin position="1"/>
        <end position="596"/>
    </location>
</feature>
<feature type="domain" description="tr-type G">
    <location>
        <begin position="2"/>
        <end position="183"/>
    </location>
</feature>
<feature type="binding site" evidence="1">
    <location>
        <begin position="14"/>
        <end position="19"/>
    </location>
    <ligand>
        <name>GTP</name>
        <dbReference type="ChEBI" id="CHEBI:37565"/>
    </ligand>
</feature>
<feature type="binding site" evidence="1">
    <location>
        <begin position="130"/>
        <end position="133"/>
    </location>
    <ligand>
        <name>GTP</name>
        <dbReference type="ChEBI" id="CHEBI:37565"/>
    </ligand>
</feature>
<proteinExistence type="inferred from homology"/>
<dbReference type="EC" id="3.6.5.n1" evidence="1"/>
<dbReference type="EMBL" id="CP000487">
    <property type="protein sequence ID" value="ABK83285.1"/>
    <property type="molecule type" value="Genomic_DNA"/>
</dbReference>
<dbReference type="RefSeq" id="WP_011732221.1">
    <property type="nucleotide sequence ID" value="NC_008599.1"/>
</dbReference>
<dbReference type="SMR" id="A0RQX4"/>
<dbReference type="GeneID" id="61065290"/>
<dbReference type="KEGG" id="cff:CFF8240_1473"/>
<dbReference type="PATRIC" id="fig|360106.6.peg.1434"/>
<dbReference type="eggNOG" id="COG0481">
    <property type="taxonomic scope" value="Bacteria"/>
</dbReference>
<dbReference type="HOGENOM" id="CLU_009995_3_3_7"/>
<dbReference type="Proteomes" id="UP000000760">
    <property type="component" value="Chromosome"/>
</dbReference>
<dbReference type="GO" id="GO:0005886">
    <property type="term" value="C:plasma membrane"/>
    <property type="evidence" value="ECO:0007669"/>
    <property type="project" value="UniProtKB-SubCell"/>
</dbReference>
<dbReference type="GO" id="GO:0005525">
    <property type="term" value="F:GTP binding"/>
    <property type="evidence" value="ECO:0007669"/>
    <property type="project" value="UniProtKB-UniRule"/>
</dbReference>
<dbReference type="GO" id="GO:0003924">
    <property type="term" value="F:GTPase activity"/>
    <property type="evidence" value="ECO:0007669"/>
    <property type="project" value="UniProtKB-UniRule"/>
</dbReference>
<dbReference type="GO" id="GO:0043022">
    <property type="term" value="F:ribosome binding"/>
    <property type="evidence" value="ECO:0007669"/>
    <property type="project" value="UniProtKB-UniRule"/>
</dbReference>
<dbReference type="GO" id="GO:0003746">
    <property type="term" value="F:translation elongation factor activity"/>
    <property type="evidence" value="ECO:0007669"/>
    <property type="project" value="UniProtKB-UniRule"/>
</dbReference>
<dbReference type="GO" id="GO:0045727">
    <property type="term" value="P:positive regulation of translation"/>
    <property type="evidence" value="ECO:0007669"/>
    <property type="project" value="UniProtKB-UniRule"/>
</dbReference>
<dbReference type="CDD" id="cd03699">
    <property type="entry name" value="EF4_II"/>
    <property type="match status" value="1"/>
</dbReference>
<dbReference type="CDD" id="cd16260">
    <property type="entry name" value="EF4_III"/>
    <property type="match status" value="1"/>
</dbReference>
<dbReference type="CDD" id="cd01890">
    <property type="entry name" value="LepA"/>
    <property type="match status" value="1"/>
</dbReference>
<dbReference type="CDD" id="cd03709">
    <property type="entry name" value="lepA_C"/>
    <property type="match status" value="1"/>
</dbReference>
<dbReference type="FunFam" id="3.40.50.300:FF:000078">
    <property type="entry name" value="Elongation factor 4"/>
    <property type="match status" value="1"/>
</dbReference>
<dbReference type="FunFam" id="2.40.30.10:FF:000015">
    <property type="entry name" value="Translation factor GUF1, mitochondrial"/>
    <property type="match status" value="1"/>
</dbReference>
<dbReference type="FunFam" id="3.30.70.240:FF:000007">
    <property type="entry name" value="Translation factor GUF1, mitochondrial"/>
    <property type="match status" value="1"/>
</dbReference>
<dbReference type="FunFam" id="3.30.70.2570:FF:000001">
    <property type="entry name" value="Translation factor GUF1, mitochondrial"/>
    <property type="match status" value="1"/>
</dbReference>
<dbReference type="FunFam" id="3.30.70.870:FF:000004">
    <property type="entry name" value="Translation factor GUF1, mitochondrial"/>
    <property type="match status" value="1"/>
</dbReference>
<dbReference type="Gene3D" id="3.30.70.240">
    <property type="match status" value="1"/>
</dbReference>
<dbReference type="Gene3D" id="3.30.70.2570">
    <property type="entry name" value="Elongation factor 4, C-terminal domain"/>
    <property type="match status" value="1"/>
</dbReference>
<dbReference type="Gene3D" id="3.30.70.870">
    <property type="entry name" value="Elongation Factor G (Translational Gtpase), domain 3"/>
    <property type="match status" value="1"/>
</dbReference>
<dbReference type="Gene3D" id="3.40.50.300">
    <property type="entry name" value="P-loop containing nucleotide triphosphate hydrolases"/>
    <property type="match status" value="1"/>
</dbReference>
<dbReference type="Gene3D" id="2.40.30.10">
    <property type="entry name" value="Translation factors"/>
    <property type="match status" value="1"/>
</dbReference>
<dbReference type="HAMAP" id="MF_00071">
    <property type="entry name" value="LepA"/>
    <property type="match status" value="1"/>
</dbReference>
<dbReference type="InterPro" id="IPR006297">
    <property type="entry name" value="EF-4"/>
</dbReference>
<dbReference type="InterPro" id="IPR035647">
    <property type="entry name" value="EFG_III/V"/>
</dbReference>
<dbReference type="InterPro" id="IPR000640">
    <property type="entry name" value="EFG_V-like"/>
</dbReference>
<dbReference type="InterPro" id="IPR004161">
    <property type="entry name" value="EFTu-like_2"/>
</dbReference>
<dbReference type="InterPro" id="IPR031157">
    <property type="entry name" value="G_TR_CS"/>
</dbReference>
<dbReference type="InterPro" id="IPR038363">
    <property type="entry name" value="LepA_C_sf"/>
</dbReference>
<dbReference type="InterPro" id="IPR013842">
    <property type="entry name" value="LepA_CTD"/>
</dbReference>
<dbReference type="InterPro" id="IPR035654">
    <property type="entry name" value="LepA_IV"/>
</dbReference>
<dbReference type="InterPro" id="IPR027417">
    <property type="entry name" value="P-loop_NTPase"/>
</dbReference>
<dbReference type="InterPro" id="IPR005225">
    <property type="entry name" value="Small_GTP-bd"/>
</dbReference>
<dbReference type="InterPro" id="IPR000795">
    <property type="entry name" value="T_Tr_GTP-bd_dom"/>
</dbReference>
<dbReference type="NCBIfam" id="TIGR01393">
    <property type="entry name" value="lepA"/>
    <property type="match status" value="1"/>
</dbReference>
<dbReference type="NCBIfam" id="TIGR00231">
    <property type="entry name" value="small_GTP"/>
    <property type="match status" value="1"/>
</dbReference>
<dbReference type="PANTHER" id="PTHR43512:SF4">
    <property type="entry name" value="TRANSLATION FACTOR GUF1 HOMOLOG, CHLOROPLASTIC"/>
    <property type="match status" value="1"/>
</dbReference>
<dbReference type="PANTHER" id="PTHR43512">
    <property type="entry name" value="TRANSLATION FACTOR GUF1-RELATED"/>
    <property type="match status" value="1"/>
</dbReference>
<dbReference type="Pfam" id="PF00679">
    <property type="entry name" value="EFG_C"/>
    <property type="match status" value="1"/>
</dbReference>
<dbReference type="Pfam" id="PF00009">
    <property type="entry name" value="GTP_EFTU"/>
    <property type="match status" value="1"/>
</dbReference>
<dbReference type="Pfam" id="PF03144">
    <property type="entry name" value="GTP_EFTU_D2"/>
    <property type="match status" value="1"/>
</dbReference>
<dbReference type="Pfam" id="PF06421">
    <property type="entry name" value="LepA_C"/>
    <property type="match status" value="1"/>
</dbReference>
<dbReference type="PRINTS" id="PR00315">
    <property type="entry name" value="ELONGATNFCT"/>
</dbReference>
<dbReference type="SMART" id="SM00838">
    <property type="entry name" value="EFG_C"/>
    <property type="match status" value="1"/>
</dbReference>
<dbReference type="SUPFAM" id="SSF54980">
    <property type="entry name" value="EF-G C-terminal domain-like"/>
    <property type="match status" value="2"/>
</dbReference>
<dbReference type="SUPFAM" id="SSF52540">
    <property type="entry name" value="P-loop containing nucleoside triphosphate hydrolases"/>
    <property type="match status" value="1"/>
</dbReference>
<dbReference type="PROSITE" id="PS00301">
    <property type="entry name" value="G_TR_1"/>
    <property type="match status" value="1"/>
</dbReference>
<dbReference type="PROSITE" id="PS51722">
    <property type="entry name" value="G_TR_2"/>
    <property type="match status" value="1"/>
</dbReference>